<protein>
    <recommendedName>
        <fullName>Beta-nerve growth factor</fullName>
        <shortName>Beta-NGF</shortName>
    </recommendedName>
</protein>
<dbReference type="EMBL" id="BC146037">
    <property type="protein sequence ID" value="AAI46038.1"/>
    <property type="molecule type" value="mRNA"/>
</dbReference>
<dbReference type="EMBL" id="Y09566">
    <property type="protein sequence ID" value="CAA70759.1"/>
    <property type="molecule type" value="Genomic_DNA"/>
</dbReference>
<dbReference type="EMBL" id="M26809">
    <property type="protein sequence ID" value="AAA30666.1"/>
    <property type="molecule type" value="mRNA"/>
</dbReference>
<dbReference type="PIR" id="A26312">
    <property type="entry name" value="A26312"/>
</dbReference>
<dbReference type="RefSeq" id="NP_001092832.1">
    <property type="nucleotide sequence ID" value="NM_001099362.1"/>
</dbReference>
<dbReference type="RefSeq" id="XP_010801404.1">
    <property type="nucleotide sequence ID" value="XM_010803102.4"/>
</dbReference>
<dbReference type="RefSeq" id="XP_059737544.1">
    <property type="nucleotide sequence ID" value="XM_059881561.1"/>
</dbReference>
<dbReference type="RefSeq" id="XP_059737547.1">
    <property type="nucleotide sequence ID" value="XM_059881564.1"/>
</dbReference>
<dbReference type="SMR" id="P13600"/>
<dbReference type="FunCoup" id="P13600">
    <property type="interactions" value="507"/>
</dbReference>
<dbReference type="STRING" id="9913.ENSBTAP00000058743"/>
<dbReference type="GlyCosmos" id="P13600">
    <property type="glycosylation" value="1 site, No reported glycans"/>
</dbReference>
<dbReference type="GlyGen" id="P13600">
    <property type="glycosylation" value="1 site"/>
</dbReference>
<dbReference type="PaxDb" id="9913-ENSBTAP00000009796"/>
<dbReference type="ABCD" id="P13600">
    <property type="antibodies" value="1 sequenced antibody"/>
</dbReference>
<dbReference type="Ensembl" id="ENSBTAT00000076924.2">
    <property type="protein sequence ID" value="ENSBTAP00000058743.2"/>
    <property type="gene ID" value="ENSBTAG00000007446.6"/>
</dbReference>
<dbReference type="Ensembl" id="ENSBTAT00000082723.2">
    <property type="protein sequence ID" value="ENSBTAP00000066323.2"/>
    <property type="gene ID" value="ENSBTAG00000007446.6"/>
</dbReference>
<dbReference type="Ensembl" id="ENSBTAT00000090500.1">
    <property type="protein sequence ID" value="ENSBTAP00000090918.1"/>
    <property type="gene ID" value="ENSBTAG00000007446.6"/>
</dbReference>
<dbReference type="Ensembl" id="ENSBTAT00000097826.1">
    <property type="protein sequence ID" value="ENSBTAP00000088368.1"/>
    <property type="gene ID" value="ENSBTAG00000007446.6"/>
</dbReference>
<dbReference type="Ensembl" id="ENSBTAT00000098478.1">
    <property type="protein sequence ID" value="ENSBTAP00000076394.1"/>
    <property type="gene ID" value="ENSBTAG00000007446.6"/>
</dbReference>
<dbReference type="Ensembl" id="ENSBTAT00000109745.1">
    <property type="protein sequence ID" value="ENSBTAP00000098796.1"/>
    <property type="gene ID" value="ENSBTAG00000007446.6"/>
</dbReference>
<dbReference type="Ensembl" id="ENSBTAT00000127237.1">
    <property type="protein sequence ID" value="ENSBTAP00000086860.1"/>
    <property type="gene ID" value="ENSBTAG00000007446.6"/>
</dbReference>
<dbReference type="Ensembl" id="ENSBTAT00000130280.1">
    <property type="protein sequence ID" value="ENSBTAP00000102474.1"/>
    <property type="gene ID" value="ENSBTAG00000007446.6"/>
</dbReference>
<dbReference type="Ensembl" id="ENSBTAT00000133589.1">
    <property type="protein sequence ID" value="ENSBTAP00000080623.1"/>
    <property type="gene ID" value="ENSBTAG00000007446.6"/>
</dbReference>
<dbReference type="GeneID" id="281350"/>
<dbReference type="KEGG" id="bta:281350"/>
<dbReference type="CTD" id="4803"/>
<dbReference type="VGNC" id="VGNC:32061">
    <property type="gene designation" value="NGF"/>
</dbReference>
<dbReference type="eggNOG" id="ENOG502RYPU">
    <property type="taxonomic scope" value="Eukaryota"/>
</dbReference>
<dbReference type="GeneTree" id="ENSGT00390000007725"/>
<dbReference type="HOGENOM" id="CLU_059942_1_1_1"/>
<dbReference type="InParanoid" id="P13600"/>
<dbReference type="OrthoDB" id="6491780at2759"/>
<dbReference type="TreeFam" id="TF106463"/>
<dbReference type="Proteomes" id="UP000009136">
    <property type="component" value="Chromosome 3"/>
</dbReference>
<dbReference type="GO" id="GO:0030424">
    <property type="term" value="C:axon"/>
    <property type="evidence" value="ECO:0000318"/>
    <property type="project" value="GO_Central"/>
</dbReference>
<dbReference type="GO" id="GO:0030425">
    <property type="term" value="C:dendrite"/>
    <property type="evidence" value="ECO:0000318"/>
    <property type="project" value="GO_Central"/>
</dbReference>
<dbReference type="GO" id="GO:0031904">
    <property type="term" value="C:endosome lumen"/>
    <property type="evidence" value="ECO:0007669"/>
    <property type="project" value="UniProtKB-SubCell"/>
</dbReference>
<dbReference type="GO" id="GO:0005615">
    <property type="term" value="C:extracellular space"/>
    <property type="evidence" value="ECO:0000318"/>
    <property type="project" value="GO_Central"/>
</dbReference>
<dbReference type="GO" id="GO:0008021">
    <property type="term" value="C:synaptic vesicle"/>
    <property type="evidence" value="ECO:0000318"/>
    <property type="project" value="GO_Central"/>
</dbReference>
<dbReference type="GO" id="GO:0008083">
    <property type="term" value="F:growth factor activity"/>
    <property type="evidence" value="ECO:0000318"/>
    <property type="project" value="GO_Central"/>
</dbReference>
<dbReference type="GO" id="GO:0008289">
    <property type="term" value="F:lipid binding"/>
    <property type="evidence" value="ECO:0007669"/>
    <property type="project" value="UniProtKB-KW"/>
</dbReference>
<dbReference type="GO" id="GO:0008191">
    <property type="term" value="F:metalloendopeptidase inhibitor activity"/>
    <property type="evidence" value="ECO:0000250"/>
    <property type="project" value="UniProtKB"/>
</dbReference>
<dbReference type="GO" id="GO:0005163">
    <property type="term" value="F:nerve growth factor receptor binding"/>
    <property type="evidence" value="ECO:0000318"/>
    <property type="project" value="GO_Central"/>
</dbReference>
<dbReference type="GO" id="GO:0007169">
    <property type="term" value="P:cell surface receptor protein tyrosine kinase signaling pathway"/>
    <property type="evidence" value="ECO:0000318"/>
    <property type="project" value="GO_Central"/>
</dbReference>
<dbReference type="GO" id="GO:0050804">
    <property type="term" value="P:modulation of chemical synaptic transmission"/>
    <property type="evidence" value="ECO:0000318"/>
    <property type="project" value="GO_Central"/>
</dbReference>
<dbReference type="GO" id="GO:0043524">
    <property type="term" value="P:negative regulation of neuron apoptotic process"/>
    <property type="evidence" value="ECO:0000318"/>
    <property type="project" value="GO_Central"/>
</dbReference>
<dbReference type="GO" id="GO:0021675">
    <property type="term" value="P:nerve development"/>
    <property type="evidence" value="ECO:0000318"/>
    <property type="project" value="GO_Central"/>
</dbReference>
<dbReference type="GO" id="GO:0038180">
    <property type="term" value="P:nerve growth factor signaling pathway"/>
    <property type="evidence" value="ECO:0000318"/>
    <property type="project" value="GO_Central"/>
</dbReference>
<dbReference type="GO" id="GO:0048812">
    <property type="term" value="P:neuron projection morphogenesis"/>
    <property type="evidence" value="ECO:0000318"/>
    <property type="project" value="GO_Central"/>
</dbReference>
<dbReference type="FunFam" id="2.10.90.10:FF:000002">
    <property type="entry name" value="Brain-derived neurotrophic factor"/>
    <property type="match status" value="1"/>
</dbReference>
<dbReference type="Gene3D" id="2.10.90.10">
    <property type="entry name" value="Cystine-knot cytokines"/>
    <property type="match status" value="1"/>
</dbReference>
<dbReference type="InterPro" id="IPR029034">
    <property type="entry name" value="Cystine-knot_cytokine"/>
</dbReference>
<dbReference type="InterPro" id="IPR020408">
    <property type="entry name" value="Nerve_growth_factor-like"/>
</dbReference>
<dbReference type="InterPro" id="IPR002072">
    <property type="entry name" value="Nerve_growth_factor-rel"/>
</dbReference>
<dbReference type="InterPro" id="IPR020425">
    <property type="entry name" value="Nerve_growth_factor_bsu"/>
</dbReference>
<dbReference type="InterPro" id="IPR020437">
    <property type="entry name" value="Nerve_growth_factor_bsu_mml"/>
</dbReference>
<dbReference type="InterPro" id="IPR019846">
    <property type="entry name" value="Nerve_growth_factor_CS"/>
</dbReference>
<dbReference type="PANTHER" id="PTHR11589:SF10">
    <property type="entry name" value="BETA-NERVE GROWTH FACTOR"/>
    <property type="match status" value="1"/>
</dbReference>
<dbReference type="PANTHER" id="PTHR11589">
    <property type="entry name" value="NERVE GROWTH FACTOR NGF -RELATED"/>
    <property type="match status" value="1"/>
</dbReference>
<dbReference type="Pfam" id="PF00243">
    <property type="entry name" value="NGF"/>
    <property type="match status" value="1"/>
</dbReference>
<dbReference type="PIRSF" id="PIRSF001789">
    <property type="entry name" value="NGF"/>
    <property type="match status" value="1"/>
</dbReference>
<dbReference type="PRINTS" id="PR01925">
    <property type="entry name" value="MAMLNGFBETA"/>
</dbReference>
<dbReference type="PRINTS" id="PR00268">
    <property type="entry name" value="NGF"/>
</dbReference>
<dbReference type="PRINTS" id="PR01913">
    <property type="entry name" value="NGFBETA"/>
</dbReference>
<dbReference type="SMART" id="SM00140">
    <property type="entry name" value="NGF"/>
    <property type="match status" value="1"/>
</dbReference>
<dbReference type="SUPFAM" id="SSF57501">
    <property type="entry name" value="Cystine-knot cytokines"/>
    <property type="match status" value="1"/>
</dbReference>
<dbReference type="PROSITE" id="PS00248">
    <property type="entry name" value="NGF_1"/>
    <property type="match status" value="1"/>
</dbReference>
<dbReference type="PROSITE" id="PS50270">
    <property type="entry name" value="NGF_2"/>
    <property type="match status" value="1"/>
</dbReference>
<reference key="1">
    <citation type="submission" date="2007-06" db="EMBL/GenBank/DDBJ databases">
        <authorList>
            <consortium name="NIH - Mammalian Gene Collection (MGC) project"/>
        </authorList>
    </citation>
    <scope>NUCLEOTIDE SEQUENCE [LARGE SCALE MRNA]</scope>
    <source>
        <strain>Hereford</strain>
        <tissue>Ovary</tissue>
    </source>
</reference>
<reference key="2">
    <citation type="journal article" date="1997" name="Cytogenet. Cell Genet.">
        <title>Assignment of the beta-nerve growth factor (NGFB) to bovine chromosome 3 band q23 by in situ hybridization.</title>
        <authorList>
            <person name="Elduque C."/>
            <person name="Laurent P."/>
            <person name="Hayes H."/>
            <person name="Rodellar C."/>
            <person name="Leveziel H."/>
            <person name="Zaragoza P."/>
        </authorList>
    </citation>
    <scope>NUCLEOTIDE SEQUENCE [GENOMIC DNA] OF 11-241</scope>
    <source>
        <tissue>Blood</tissue>
    </source>
</reference>
<reference key="3">
    <citation type="journal article" date="1986" name="EMBO J.">
        <title>Molecular cloning of bovine and chick nerve growth factor (NGF): delineation of conserved and unconserved domains and their relationship to the biological activity and antigenicity of NGF.</title>
        <authorList>
            <person name="Meier R."/>
            <person name="Becker-Andre M."/>
            <person name="Gotz R."/>
            <person name="Heumann R."/>
            <person name="Shaw A."/>
            <person name="Thoenen H."/>
        </authorList>
    </citation>
    <scope>NUCLEOTIDE SEQUENCE [MRNA] OF 117-241</scope>
</reference>
<proteinExistence type="evidence at transcript level"/>
<evidence type="ECO:0000250" key="1"/>
<evidence type="ECO:0000250" key="2">
    <source>
        <dbReference type="UniProtKB" id="P01138"/>
    </source>
</evidence>
<evidence type="ECO:0000250" key="3">
    <source>
        <dbReference type="UniProtKB" id="P01139"/>
    </source>
</evidence>
<evidence type="ECO:0000255" key="4"/>
<evidence type="ECO:0000305" key="5"/>
<gene>
    <name type="primary">NGF</name>
    <name type="synonym">NGFB</name>
</gene>
<keyword id="KW-0165">Cleavage on pair of basic residues</keyword>
<keyword id="KW-1015">Disulfide bond</keyword>
<keyword id="KW-0967">Endosome</keyword>
<keyword id="KW-0325">Glycoprotein</keyword>
<keyword id="KW-0339">Growth factor</keyword>
<keyword id="KW-0446">Lipid-binding</keyword>
<keyword id="KW-0481">Metalloenzyme inhibitor</keyword>
<keyword id="KW-0483">Metalloprotease inhibitor</keyword>
<keyword id="KW-0646">Protease inhibitor</keyword>
<keyword id="KW-1185">Reference proteome</keyword>
<keyword id="KW-0964">Secreted</keyword>
<keyword id="KW-0732">Signal</keyword>
<comment type="function">
    <text evidence="2 3">Nerve growth factor is important for the development and maintenance of the sympathetic and sensory nervous systems. Extracellular ligand for the NTRK1 and NGFR receptors, activates cellular signaling cascades to regulate neuronal proliferation, differentiation and survival (By similarity). The immature NGF precursor (proNGF) functions as a ligand for the heterodimeric receptor formed by SORCS2 and NGFR, and activates cellular signaling cascades that lead to inactivation of RAC1 and/or RAC2, reorganization of the actin cytoskeleton and neuronal growth cone collapse. In contrast to mature NGF, the precursor form (proNGF) promotes neuronal apoptosis (in vitro) (By similarity). Inhibits metalloproteinase-dependent proteolysis of platelet glycoprotein VI (By similarity). Binds lysophosphatidylinositol and lysophosphatidylserine between the two chains of the homodimer. The lipid-bound form promotes histamine relase from mast cells, contrary to the lipid-free form (By similarity).</text>
</comment>
<comment type="subunit">
    <text evidence="2 3">Homodimer. The homodimer interacts with a single NTRK1 chain. The homodimer interacts with a single NGFR chain (By similarity). The NGF dimer interacts with a single SORCS2 chain (via extracellular domain). The NGF precursor (proNGF) binds to a receptor complex formed by SORT1 and NGFR, which leads to NGF endocytosis. Both mature NGF and the immature NGF precursor (proNGF) interact with SORCS2 and with the heterodimer formed by SORCS2 and NGFR (via extracellular domains). The NGF precursor (proNGF) has much higher affinity for SORCS2 than mature NGF. The NGF precursor (proNGF) has much higher affinity for SORT1 than mature NGF (By similarity). Interacts with ADAM10 in a divalent cation-dependent manner (By similarity). Interacts with SORCS3 (By similarity).</text>
</comment>
<comment type="subcellular location">
    <subcellularLocation>
        <location evidence="2">Secreted</location>
    </subcellularLocation>
    <subcellularLocation>
        <location evidence="3">Endosome lumen</location>
    </subcellularLocation>
    <text evidence="3">ProNGF is endocytosed after binding to the cell surface receptor formed by SORT1 and NGFR.</text>
</comment>
<comment type="similarity">
    <text evidence="5">Belongs to the NGF-beta family.</text>
</comment>
<feature type="signal peptide" evidence="4">
    <location>
        <begin position="1"/>
        <end position="18"/>
    </location>
</feature>
<feature type="propeptide" id="PRO_0000019595" evidence="1">
    <location>
        <begin position="19"/>
        <end position="121"/>
    </location>
</feature>
<feature type="chain" id="PRO_0000019596" description="Beta-nerve growth factor">
    <location>
        <begin position="122"/>
        <end position="241"/>
    </location>
</feature>
<feature type="binding site" description="in other chain" evidence="3">
    <location>
        <position position="173"/>
    </location>
    <ligand>
        <name>a 1-acyl-sn-glycero-3-phospho-(1D-myo-inositol)</name>
        <dbReference type="ChEBI" id="CHEBI:64771"/>
        <note>ligand shared between dimeric partners</note>
    </ligand>
</feature>
<feature type="binding site" evidence="3">
    <location>
        <position position="209"/>
    </location>
    <ligand>
        <name>a 1-acyl-sn-glycero-3-phospho-(1D-myo-inositol)</name>
        <dbReference type="ChEBI" id="CHEBI:64771"/>
        <note>ligand shared between dimeric partners</note>
    </ligand>
</feature>
<feature type="binding site" evidence="3">
    <location>
        <position position="209"/>
    </location>
    <ligand>
        <name>a 1-acyl-sn-glycero-3-phospho-L-serine</name>
        <dbReference type="ChEBI" id="CHEBI:64379"/>
        <note>ligand shared between dimeric partners</note>
    </ligand>
</feature>
<feature type="glycosylation site" description="N-linked (GlcNAc...) asparagine" evidence="4">
    <location>
        <position position="166"/>
    </location>
</feature>
<feature type="disulfide bond" evidence="2">
    <location>
        <begin position="136"/>
        <end position="201"/>
    </location>
</feature>
<feature type="disulfide bond" evidence="2">
    <location>
        <begin position="179"/>
        <end position="229"/>
    </location>
</feature>
<feature type="disulfide bond" evidence="2">
    <location>
        <begin position="189"/>
        <end position="231"/>
    </location>
</feature>
<feature type="sequence conflict" description="In Ref. 2; CAA70759." evidence="5" ref="2">
    <original>L</original>
    <variation>F</variation>
    <location>
        <position position="12"/>
    </location>
</feature>
<feature type="sequence conflict" description="In Ref. 2; CAA70759." evidence="5" ref="2">
    <original>F</original>
    <variation>L</variation>
    <location>
        <position position="128"/>
    </location>
</feature>
<feature type="sequence conflict" description="In Ref. 2; CAA70759." evidence="5" ref="2">
    <original>K</original>
    <variation>R</variation>
    <location>
        <position position="171"/>
    </location>
</feature>
<feature type="sequence conflict" description="In Ref. 2; CAA70759." evidence="5" ref="2">
    <original>RA</original>
    <variation>AP</variation>
    <location>
        <begin position="240"/>
        <end position="241"/>
    </location>
</feature>
<accession>P13600</accession>
<accession>A6H6X9</accession>
<accession>O18969</accession>
<sequence>MSMLFYTLITALLIGIQAAPHTESNVPAGHAIPQAHWIKLQHSLDTVLRRAHSAPAGPIAARVAGQTHNITVDPKLFKKRRLRSPRVLFSTQPPPVAADTQDLDFEAGGASSFNRTHRSKRSSSHPVFHRGEFSVCDSISVWVGDKTTATDIKGKEVMVLGEVNINNSVFKQYFFETKCRDPNPVDSGCRGIDAKHWNSYCTTTHTFVKALTMDGKQAAWRFIRIDTACVCVLSRKTGQRA</sequence>
<organism>
    <name type="scientific">Bos taurus</name>
    <name type="common">Bovine</name>
    <dbReference type="NCBI Taxonomy" id="9913"/>
    <lineage>
        <taxon>Eukaryota</taxon>
        <taxon>Metazoa</taxon>
        <taxon>Chordata</taxon>
        <taxon>Craniata</taxon>
        <taxon>Vertebrata</taxon>
        <taxon>Euteleostomi</taxon>
        <taxon>Mammalia</taxon>
        <taxon>Eutheria</taxon>
        <taxon>Laurasiatheria</taxon>
        <taxon>Artiodactyla</taxon>
        <taxon>Ruminantia</taxon>
        <taxon>Pecora</taxon>
        <taxon>Bovidae</taxon>
        <taxon>Bovinae</taxon>
        <taxon>Bos</taxon>
    </lineage>
</organism>
<name>NGF_BOVIN</name>